<protein>
    <recommendedName>
        <fullName>Cytochrome b</fullName>
    </recommendedName>
    <alternativeName>
        <fullName>Complex III subunit 3</fullName>
    </alternativeName>
    <alternativeName>
        <fullName>Complex III subunit III</fullName>
    </alternativeName>
    <alternativeName>
        <fullName>Cytochrome b-c1 complex subunit 3</fullName>
    </alternativeName>
    <alternativeName>
        <fullName>Ubiquinol-cytochrome-c reductase complex cytochrome b subunit</fullName>
    </alternativeName>
</protein>
<geneLocation type="mitochondrion"/>
<dbReference type="EMBL" id="DQ095782">
    <property type="protein sequence ID" value="AAZ66629.1"/>
    <property type="molecule type" value="Genomic_DNA"/>
</dbReference>
<dbReference type="EMBL" id="DQ095783">
    <property type="protein sequence ID" value="AAZ66630.1"/>
    <property type="molecule type" value="Genomic_DNA"/>
</dbReference>
<dbReference type="SMR" id="Q3YLA8"/>
<dbReference type="GO" id="GO:0005743">
    <property type="term" value="C:mitochondrial inner membrane"/>
    <property type="evidence" value="ECO:0007669"/>
    <property type="project" value="UniProtKB-SubCell"/>
</dbReference>
<dbReference type="GO" id="GO:0045275">
    <property type="term" value="C:respiratory chain complex III"/>
    <property type="evidence" value="ECO:0007669"/>
    <property type="project" value="InterPro"/>
</dbReference>
<dbReference type="GO" id="GO:0046872">
    <property type="term" value="F:metal ion binding"/>
    <property type="evidence" value="ECO:0007669"/>
    <property type="project" value="UniProtKB-KW"/>
</dbReference>
<dbReference type="GO" id="GO:0008121">
    <property type="term" value="F:ubiquinol-cytochrome-c reductase activity"/>
    <property type="evidence" value="ECO:0007669"/>
    <property type="project" value="InterPro"/>
</dbReference>
<dbReference type="GO" id="GO:0006122">
    <property type="term" value="P:mitochondrial electron transport, ubiquinol to cytochrome c"/>
    <property type="evidence" value="ECO:0007669"/>
    <property type="project" value="TreeGrafter"/>
</dbReference>
<dbReference type="CDD" id="cd00290">
    <property type="entry name" value="cytochrome_b_C"/>
    <property type="match status" value="1"/>
</dbReference>
<dbReference type="CDD" id="cd00284">
    <property type="entry name" value="Cytochrome_b_N"/>
    <property type="match status" value="1"/>
</dbReference>
<dbReference type="FunFam" id="1.20.810.10:FF:000002">
    <property type="entry name" value="Cytochrome b"/>
    <property type="match status" value="1"/>
</dbReference>
<dbReference type="Gene3D" id="1.20.810.10">
    <property type="entry name" value="Cytochrome Bc1 Complex, Chain C"/>
    <property type="match status" value="1"/>
</dbReference>
<dbReference type="InterPro" id="IPR005798">
    <property type="entry name" value="Cyt_b/b6_C"/>
</dbReference>
<dbReference type="InterPro" id="IPR036150">
    <property type="entry name" value="Cyt_b/b6_C_sf"/>
</dbReference>
<dbReference type="InterPro" id="IPR005797">
    <property type="entry name" value="Cyt_b/b6_N"/>
</dbReference>
<dbReference type="InterPro" id="IPR027387">
    <property type="entry name" value="Cytb/b6-like_sf"/>
</dbReference>
<dbReference type="InterPro" id="IPR030689">
    <property type="entry name" value="Cytochrome_b"/>
</dbReference>
<dbReference type="InterPro" id="IPR048260">
    <property type="entry name" value="Cytochrome_b_C_euk/bac"/>
</dbReference>
<dbReference type="InterPro" id="IPR048259">
    <property type="entry name" value="Cytochrome_b_N_euk/bac"/>
</dbReference>
<dbReference type="InterPro" id="IPR016174">
    <property type="entry name" value="Di-haem_cyt_TM"/>
</dbReference>
<dbReference type="PANTHER" id="PTHR19271">
    <property type="entry name" value="CYTOCHROME B"/>
    <property type="match status" value="1"/>
</dbReference>
<dbReference type="PANTHER" id="PTHR19271:SF16">
    <property type="entry name" value="CYTOCHROME B"/>
    <property type="match status" value="1"/>
</dbReference>
<dbReference type="Pfam" id="PF00032">
    <property type="entry name" value="Cytochrom_B_C"/>
    <property type="match status" value="1"/>
</dbReference>
<dbReference type="Pfam" id="PF00033">
    <property type="entry name" value="Cytochrome_B"/>
    <property type="match status" value="1"/>
</dbReference>
<dbReference type="PIRSF" id="PIRSF038885">
    <property type="entry name" value="COB"/>
    <property type="match status" value="1"/>
</dbReference>
<dbReference type="SUPFAM" id="SSF81648">
    <property type="entry name" value="a domain/subunit of cytochrome bc1 complex (Ubiquinol-cytochrome c reductase)"/>
    <property type="match status" value="1"/>
</dbReference>
<dbReference type="SUPFAM" id="SSF81342">
    <property type="entry name" value="Transmembrane di-heme cytochromes"/>
    <property type="match status" value="1"/>
</dbReference>
<dbReference type="PROSITE" id="PS51003">
    <property type="entry name" value="CYTB_CTER"/>
    <property type="match status" value="1"/>
</dbReference>
<dbReference type="PROSITE" id="PS51002">
    <property type="entry name" value="CYTB_NTER"/>
    <property type="match status" value="1"/>
</dbReference>
<accession>Q3YLA8</accession>
<keyword id="KW-0249">Electron transport</keyword>
<keyword id="KW-0349">Heme</keyword>
<keyword id="KW-0408">Iron</keyword>
<keyword id="KW-0472">Membrane</keyword>
<keyword id="KW-0479">Metal-binding</keyword>
<keyword id="KW-0496">Mitochondrion</keyword>
<keyword id="KW-0999">Mitochondrion inner membrane</keyword>
<keyword id="KW-0679">Respiratory chain</keyword>
<keyword id="KW-0812">Transmembrane</keyword>
<keyword id="KW-1133">Transmembrane helix</keyword>
<keyword id="KW-0813">Transport</keyword>
<keyword id="KW-0830">Ubiquinone</keyword>
<sequence>MTNIRKTHPLMKIMNSSFIDLPAPSNISSWWNFGSLLGACLAIQIITGLFLAMHYTADTATAFSSVTHICRDVNQGWIIRYLHANGASMFFLCLFLHVGRGMYYGSFTLSETWNIGIILLFTVMATAFMGYVLPWGQMSFWGATVITNLLSAIPYIGTDLVEWIWGGFSVDKATLTRFFAFHFILPFIISALVLVHLLFLHETGSNNPLGTPSESDKIPFHPYYTIKDLLGLMFLLLTLTILVLFSPDLLGDPDNYMPANPLSTPPHIKPEWYFLFAYAILRSIPNKLGGVLALIMSILILAIIPILQTAKQRSMIFRPLSQIMFWILTADLFTLTWIGGQPVEHPFVTIGQVASILYFSLILIIMPTVSLMENKMLKW</sequence>
<proteinExistence type="inferred from homology"/>
<evidence type="ECO:0000250" key="1"/>
<evidence type="ECO:0000250" key="2">
    <source>
        <dbReference type="UniProtKB" id="P00157"/>
    </source>
</evidence>
<evidence type="ECO:0000255" key="3">
    <source>
        <dbReference type="PROSITE-ProRule" id="PRU00967"/>
    </source>
</evidence>
<evidence type="ECO:0000255" key="4">
    <source>
        <dbReference type="PROSITE-ProRule" id="PRU00968"/>
    </source>
</evidence>
<name>CYB_MICLH</name>
<gene>
    <name type="primary">MT-CYB</name>
    <name type="synonym">COB</name>
    <name type="synonym">CYTB</name>
    <name type="synonym">MTCYB</name>
</gene>
<comment type="function">
    <text evidence="2">Component of the ubiquinol-cytochrome c reductase complex (complex III or cytochrome b-c1 complex) that is part of the mitochondrial respiratory chain. The b-c1 complex mediates electron transfer from ubiquinol to cytochrome c. Contributes to the generation of a proton gradient across the mitochondrial membrane that is then used for ATP synthesis.</text>
</comment>
<comment type="cofactor">
    <cofactor evidence="2">
        <name>heme b</name>
        <dbReference type="ChEBI" id="CHEBI:60344"/>
    </cofactor>
    <text evidence="2">Binds 2 heme b groups non-covalently.</text>
</comment>
<comment type="subunit">
    <text evidence="2">The cytochrome bc1 complex contains 11 subunits: 3 respiratory subunits (MT-CYB, CYC1 and UQCRFS1), 2 core proteins (UQCRC1 and UQCRC2) and 6 low-molecular weight proteins (UQCRH/QCR6, UQCRB/QCR7, UQCRQ/QCR8, UQCR10/QCR9, UQCR11/QCR10 and a cleavage product of UQCRFS1). This cytochrome bc1 complex then forms a dimer.</text>
</comment>
<comment type="subcellular location">
    <subcellularLocation>
        <location evidence="2">Mitochondrion inner membrane</location>
        <topology evidence="2">Multi-pass membrane protein</topology>
    </subcellularLocation>
</comment>
<comment type="miscellaneous">
    <text evidence="1">Heme 1 (or BL or b562) is low-potential and absorbs at about 562 nm, and heme 2 (or BH or b566) is high-potential and absorbs at about 566 nm.</text>
</comment>
<comment type="similarity">
    <text evidence="3 4">Belongs to the cytochrome b family.</text>
</comment>
<comment type="caution">
    <text evidence="2">The full-length protein contains only eight transmembrane helices, not nine as predicted by bioinformatics tools.</text>
</comment>
<organism>
    <name type="scientific">Microcebus lehilahytsara</name>
    <name type="common">Goodman's mouse lemur</name>
    <dbReference type="NCBI Taxonomy" id="343908"/>
    <lineage>
        <taxon>Eukaryota</taxon>
        <taxon>Metazoa</taxon>
        <taxon>Chordata</taxon>
        <taxon>Craniata</taxon>
        <taxon>Vertebrata</taxon>
        <taxon>Euteleostomi</taxon>
        <taxon>Mammalia</taxon>
        <taxon>Eutheria</taxon>
        <taxon>Euarchontoglires</taxon>
        <taxon>Primates</taxon>
        <taxon>Strepsirrhini</taxon>
        <taxon>Lemuriformes</taxon>
        <taxon>Cheirogaleidae</taxon>
        <taxon>Microcebus</taxon>
    </lineage>
</organism>
<feature type="chain" id="PRO_0000227751" description="Cytochrome b">
    <location>
        <begin position="1"/>
        <end position="379"/>
    </location>
</feature>
<feature type="transmembrane region" description="Helical" evidence="2">
    <location>
        <begin position="33"/>
        <end position="53"/>
    </location>
</feature>
<feature type="transmembrane region" description="Helical" evidence="2">
    <location>
        <begin position="77"/>
        <end position="98"/>
    </location>
</feature>
<feature type="transmembrane region" description="Helical" evidence="2">
    <location>
        <begin position="113"/>
        <end position="133"/>
    </location>
</feature>
<feature type="transmembrane region" description="Helical" evidence="2">
    <location>
        <begin position="178"/>
        <end position="198"/>
    </location>
</feature>
<feature type="transmembrane region" description="Helical" evidence="2">
    <location>
        <begin position="226"/>
        <end position="246"/>
    </location>
</feature>
<feature type="transmembrane region" description="Helical" evidence="2">
    <location>
        <begin position="288"/>
        <end position="308"/>
    </location>
</feature>
<feature type="transmembrane region" description="Helical" evidence="2">
    <location>
        <begin position="320"/>
        <end position="340"/>
    </location>
</feature>
<feature type="transmembrane region" description="Helical" evidence="2">
    <location>
        <begin position="347"/>
        <end position="367"/>
    </location>
</feature>
<feature type="binding site" description="axial binding residue" evidence="2">
    <location>
        <position position="83"/>
    </location>
    <ligand>
        <name>heme b</name>
        <dbReference type="ChEBI" id="CHEBI:60344"/>
        <label>b562</label>
    </ligand>
    <ligandPart>
        <name>Fe</name>
        <dbReference type="ChEBI" id="CHEBI:18248"/>
    </ligandPart>
</feature>
<feature type="binding site" description="axial binding residue" evidence="2">
    <location>
        <position position="97"/>
    </location>
    <ligand>
        <name>heme b</name>
        <dbReference type="ChEBI" id="CHEBI:60344"/>
        <label>b566</label>
    </ligand>
    <ligandPart>
        <name>Fe</name>
        <dbReference type="ChEBI" id="CHEBI:18248"/>
    </ligandPart>
</feature>
<feature type="binding site" description="axial binding residue" evidence="2">
    <location>
        <position position="182"/>
    </location>
    <ligand>
        <name>heme b</name>
        <dbReference type="ChEBI" id="CHEBI:60344"/>
        <label>b562</label>
    </ligand>
    <ligandPart>
        <name>Fe</name>
        <dbReference type="ChEBI" id="CHEBI:18248"/>
    </ligandPart>
</feature>
<feature type="binding site" description="axial binding residue" evidence="2">
    <location>
        <position position="196"/>
    </location>
    <ligand>
        <name>heme b</name>
        <dbReference type="ChEBI" id="CHEBI:60344"/>
        <label>b566</label>
    </ligand>
    <ligandPart>
        <name>Fe</name>
        <dbReference type="ChEBI" id="CHEBI:18248"/>
    </ligandPart>
</feature>
<feature type="binding site" evidence="2">
    <location>
        <position position="201"/>
    </location>
    <ligand>
        <name>a ubiquinone</name>
        <dbReference type="ChEBI" id="CHEBI:16389"/>
    </ligand>
</feature>
<reference key="1">
    <citation type="journal article" date="2005" name="Primate Rep.">
        <title>Morphology, behaviour and molecular evolution of giant mouse lemurs (Mirza spp.) Gray, 1870, with description of a new species.</title>
        <authorList>
            <person name="Kappeler P.M."/>
            <person name="Rasoloarison R.M."/>
            <person name="Razafimanantsoa L."/>
            <person name="Walter L."/>
            <person name="Roos C."/>
        </authorList>
    </citation>
    <scope>NUCLEOTIDE SEQUENCE [GENOMIC DNA]</scope>
    <source>
        <strain>Isolate Andasibe1</strain>
        <strain>Isolate Andasibe2</strain>
    </source>
</reference>